<accession>Q5M1S7</accession>
<comment type="function">
    <text evidence="1">Catalyzes the ATP-dependent amination of UTP to CTP with either L-glutamine or ammonia as the source of nitrogen. Regulates intracellular CTP levels through interactions with the four ribonucleotide triphosphates.</text>
</comment>
<comment type="catalytic activity">
    <reaction evidence="1">
        <text>UTP + L-glutamine + ATP + H2O = CTP + L-glutamate + ADP + phosphate + 2 H(+)</text>
        <dbReference type="Rhea" id="RHEA:26426"/>
        <dbReference type="ChEBI" id="CHEBI:15377"/>
        <dbReference type="ChEBI" id="CHEBI:15378"/>
        <dbReference type="ChEBI" id="CHEBI:29985"/>
        <dbReference type="ChEBI" id="CHEBI:30616"/>
        <dbReference type="ChEBI" id="CHEBI:37563"/>
        <dbReference type="ChEBI" id="CHEBI:43474"/>
        <dbReference type="ChEBI" id="CHEBI:46398"/>
        <dbReference type="ChEBI" id="CHEBI:58359"/>
        <dbReference type="ChEBI" id="CHEBI:456216"/>
        <dbReference type="EC" id="6.3.4.2"/>
    </reaction>
</comment>
<comment type="catalytic activity">
    <reaction evidence="1">
        <text>L-glutamine + H2O = L-glutamate + NH4(+)</text>
        <dbReference type="Rhea" id="RHEA:15889"/>
        <dbReference type="ChEBI" id="CHEBI:15377"/>
        <dbReference type="ChEBI" id="CHEBI:28938"/>
        <dbReference type="ChEBI" id="CHEBI:29985"/>
        <dbReference type="ChEBI" id="CHEBI:58359"/>
    </reaction>
</comment>
<comment type="catalytic activity">
    <reaction evidence="1">
        <text>UTP + NH4(+) + ATP = CTP + ADP + phosphate + 2 H(+)</text>
        <dbReference type="Rhea" id="RHEA:16597"/>
        <dbReference type="ChEBI" id="CHEBI:15378"/>
        <dbReference type="ChEBI" id="CHEBI:28938"/>
        <dbReference type="ChEBI" id="CHEBI:30616"/>
        <dbReference type="ChEBI" id="CHEBI:37563"/>
        <dbReference type="ChEBI" id="CHEBI:43474"/>
        <dbReference type="ChEBI" id="CHEBI:46398"/>
        <dbReference type="ChEBI" id="CHEBI:456216"/>
    </reaction>
</comment>
<comment type="activity regulation">
    <text evidence="1">Allosterically activated by GTP, when glutamine is the substrate; GTP has no effect on the reaction when ammonia is the substrate. The allosteric effector GTP functions by stabilizing the protein conformation that binds the tetrahedral intermediate(s) formed during glutamine hydrolysis. Inhibited by the product CTP, via allosteric rather than competitive inhibition.</text>
</comment>
<comment type="pathway">
    <text evidence="1">Pyrimidine metabolism; CTP biosynthesis via de novo pathway; CTP from UDP: step 2/2.</text>
</comment>
<comment type="subunit">
    <text evidence="1">Homotetramer.</text>
</comment>
<comment type="miscellaneous">
    <text evidence="1">CTPSs have evolved a hybrid strategy for distinguishing between UTP and CTP. The overlapping regions of the product feedback inhibitory and substrate sites recognize a common feature in both compounds, the triphosphate moiety. To differentiate isosteric substrate and product pyrimidine rings, an additional pocket far from the expected kinase/ligase catalytic site, specifically recognizes the cytosine and ribose portions of the product inhibitor.</text>
</comment>
<comment type="similarity">
    <text evidence="1">Belongs to the CTP synthase family.</text>
</comment>
<keyword id="KW-0067">ATP-binding</keyword>
<keyword id="KW-0315">Glutamine amidotransferase</keyword>
<keyword id="KW-0436">Ligase</keyword>
<keyword id="KW-0460">Magnesium</keyword>
<keyword id="KW-0479">Metal-binding</keyword>
<keyword id="KW-0547">Nucleotide-binding</keyword>
<keyword id="KW-0665">Pyrimidine biosynthesis</keyword>
<dbReference type="EC" id="6.3.4.2" evidence="1"/>
<dbReference type="EMBL" id="CP000024">
    <property type="protein sequence ID" value="AAV61749.1"/>
    <property type="molecule type" value="Genomic_DNA"/>
</dbReference>
<dbReference type="RefSeq" id="WP_011226790.1">
    <property type="nucleotide sequence ID" value="NC_006449.1"/>
</dbReference>
<dbReference type="SMR" id="Q5M1S7"/>
<dbReference type="KEGG" id="stc:str0134"/>
<dbReference type="HOGENOM" id="CLU_011675_5_0_9"/>
<dbReference type="UniPathway" id="UPA00159">
    <property type="reaction ID" value="UER00277"/>
</dbReference>
<dbReference type="GO" id="GO:0005829">
    <property type="term" value="C:cytosol"/>
    <property type="evidence" value="ECO:0007669"/>
    <property type="project" value="TreeGrafter"/>
</dbReference>
<dbReference type="GO" id="GO:0005524">
    <property type="term" value="F:ATP binding"/>
    <property type="evidence" value="ECO:0007669"/>
    <property type="project" value="UniProtKB-KW"/>
</dbReference>
<dbReference type="GO" id="GO:0003883">
    <property type="term" value="F:CTP synthase activity"/>
    <property type="evidence" value="ECO:0007669"/>
    <property type="project" value="UniProtKB-UniRule"/>
</dbReference>
<dbReference type="GO" id="GO:0004359">
    <property type="term" value="F:glutaminase activity"/>
    <property type="evidence" value="ECO:0007669"/>
    <property type="project" value="RHEA"/>
</dbReference>
<dbReference type="GO" id="GO:0042802">
    <property type="term" value="F:identical protein binding"/>
    <property type="evidence" value="ECO:0007669"/>
    <property type="project" value="TreeGrafter"/>
</dbReference>
<dbReference type="GO" id="GO:0046872">
    <property type="term" value="F:metal ion binding"/>
    <property type="evidence" value="ECO:0007669"/>
    <property type="project" value="UniProtKB-KW"/>
</dbReference>
<dbReference type="GO" id="GO:0044210">
    <property type="term" value="P:'de novo' CTP biosynthetic process"/>
    <property type="evidence" value="ECO:0007669"/>
    <property type="project" value="UniProtKB-UniRule"/>
</dbReference>
<dbReference type="GO" id="GO:0019856">
    <property type="term" value="P:pyrimidine nucleobase biosynthetic process"/>
    <property type="evidence" value="ECO:0007669"/>
    <property type="project" value="TreeGrafter"/>
</dbReference>
<dbReference type="CDD" id="cd03113">
    <property type="entry name" value="CTPS_N"/>
    <property type="match status" value="1"/>
</dbReference>
<dbReference type="CDD" id="cd01746">
    <property type="entry name" value="GATase1_CTP_Synthase"/>
    <property type="match status" value="1"/>
</dbReference>
<dbReference type="FunFam" id="3.40.50.300:FF:000009">
    <property type="entry name" value="CTP synthase"/>
    <property type="match status" value="1"/>
</dbReference>
<dbReference type="FunFam" id="3.40.50.880:FF:000002">
    <property type="entry name" value="CTP synthase"/>
    <property type="match status" value="1"/>
</dbReference>
<dbReference type="Gene3D" id="3.40.50.880">
    <property type="match status" value="1"/>
</dbReference>
<dbReference type="Gene3D" id="3.40.50.300">
    <property type="entry name" value="P-loop containing nucleotide triphosphate hydrolases"/>
    <property type="match status" value="1"/>
</dbReference>
<dbReference type="HAMAP" id="MF_01227">
    <property type="entry name" value="PyrG"/>
    <property type="match status" value="1"/>
</dbReference>
<dbReference type="InterPro" id="IPR029062">
    <property type="entry name" value="Class_I_gatase-like"/>
</dbReference>
<dbReference type="InterPro" id="IPR004468">
    <property type="entry name" value="CTP_synthase"/>
</dbReference>
<dbReference type="InterPro" id="IPR017456">
    <property type="entry name" value="CTP_synthase_N"/>
</dbReference>
<dbReference type="InterPro" id="IPR017926">
    <property type="entry name" value="GATASE"/>
</dbReference>
<dbReference type="InterPro" id="IPR033828">
    <property type="entry name" value="GATase1_CTP_Synthase"/>
</dbReference>
<dbReference type="InterPro" id="IPR027417">
    <property type="entry name" value="P-loop_NTPase"/>
</dbReference>
<dbReference type="NCBIfam" id="NF003792">
    <property type="entry name" value="PRK05380.1"/>
    <property type="match status" value="1"/>
</dbReference>
<dbReference type="NCBIfam" id="TIGR00337">
    <property type="entry name" value="PyrG"/>
    <property type="match status" value="1"/>
</dbReference>
<dbReference type="PANTHER" id="PTHR11550">
    <property type="entry name" value="CTP SYNTHASE"/>
    <property type="match status" value="1"/>
</dbReference>
<dbReference type="PANTHER" id="PTHR11550:SF0">
    <property type="entry name" value="CTP SYNTHASE-RELATED"/>
    <property type="match status" value="1"/>
</dbReference>
<dbReference type="Pfam" id="PF06418">
    <property type="entry name" value="CTP_synth_N"/>
    <property type="match status" value="1"/>
</dbReference>
<dbReference type="Pfam" id="PF00117">
    <property type="entry name" value="GATase"/>
    <property type="match status" value="1"/>
</dbReference>
<dbReference type="SUPFAM" id="SSF52317">
    <property type="entry name" value="Class I glutamine amidotransferase-like"/>
    <property type="match status" value="1"/>
</dbReference>
<dbReference type="SUPFAM" id="SSF52540">
    <property type="entry name" value="P-loop containing nucleoside triphosphate hydrolases"/>
    <property type="match status" value="1"/>
</dbReference>
<dbReference type="PROSITE" id="PS51273">
    <property type="entry name" value="GATASE_TYPE_1"/>
    <property type="match status" value="1"/>
</dbReference>
<sequence>MTKYIFVTGGVVSSIGKGIVAASLGRLLKNRGLKVTIQKFDPYINIDPGTMSPYQHGEVYVTDDGVETDLDLGHYERFIDINLNKYSNVTTGKIYSEVLRKERKGEYLGATVQVIPHITDALKDKIKRAATTTDSDVVITEVGGTVGDIESLPFLEALRQMKADVGSDNVMYIHTTLLPYLKAAGEMKTKPTQHSVKELRGLGIQPNMLVIRTEEPAGQGIKNKLAQFCDVAPEAVIESLDVEHIYQVPLNMQAQGMDQIVCDHLKLNAPAADMTEWSAMVDKVLNLKKTTKIALVGKYVELHDAYLSVVEALKHSGLANDTAIDIDWVNANDLTAENVASRLADADGIIVPGGFGQRGTEGKIQAIRYARENDVPMLGVCLGMQLTCIEFARHVLHLDGANSAELDPETQYPIIDIMRDQIDIEDMGGTLRLGLYPCKLKPGSKAAAAYGNQEVVQRRHRHRYEFNTKFREQFEAEGFVFSGVSPDNRLMEVVELPDKKFFVAAQYHPEYHSRPNHAEELYSAFVTAAVENAK</sequence>
<protein>
    <recommendedName>
        <fullName evidence="1">CTP synthase</fullName>
        <ecNumber evidence="1">6.3.4.2</ecNumber>
    </recommendedName>
    <alternativeName>
        <fullName evidence="1">Cytidine 5'-triphosphate synthase</fullName>
    </alternativeName>
    <alternativeName>
        <fullName evidence="1">Cytidine triphosphate synthetase</fullName>
        <shortName evidence="1">CTP synthetase</shortName>
        <shortName evidence="1">CTPS</shortName>
    </alternativeName>
    <alternativeName>
        <fullName evidence="1">UTP--ammonia ligase</fullName>
    </alternativeName>
</protein>
<reference key="1">
    <citation type="journal article" date="2004" name="Nat. Biotechnol.">
        <title>Complete sequence and comparative genome analysis of the dairy bacterium Streptococcus thermophilus.</title>
        <authorList>
            <person name="Bolotin A."/>
            <person name="Quinquis B."/>
            <person name="Renault P."/>
            <person name="Sorokin A."/>
            <person name="Ehrlich S.D."/>
            <person name="Kulakauskas S."/>
            <person name="Lapidus A."/>
            <person name="Goltsman E."/>
            <person name="Mazur M."/>
            <person name="Pusch G.D."/>
            <person name="Fonstein M."/>
            <person name="Overbeek R."/>
            <person name="Kyprides N."/>
            <person name="Purnelle B."/>
            <person name="Prozzi D."/>
            <person name="Ngui K."/>
            <person name="Masuy D."/>
            <person name="Hancy F."/>
            <person name="Burteau S."/>
            <person name="Boutry M."/>
            <person name="Delcour J."/>
            <person name="Goffeau A."/>
            <person name="Hols P."/>
        </authorList>
    </citation>
    <scope>NUCLEOTIDE SEQUENCE [LARGE SCALE GENOMIC DNA]</scope>
    <source>
        <strain>CNRZ 1066</strain>
    </source>
</reference>
<name>PYRG_STRT1</name>
<feature type="chain" id="PRO_0000266237" description="CTP synthase">
    <location>
        <begin position="1"/>
        <end position="534"/>
    </location>
</feature>
<feature type="domain" description="Glutamine amidotransferase type-1" evidence="1">
    <location>
        <begin position="292"/>
        <end position="534"/>
    </location>
</feature>
<feature type="region of interest" description="Amidoligase domain" evidence="1">
    <location>
        <begin position="1"/>
        <end position="267"/>
    </location>
</feature>
<feature type="active site" description="Nucleophile; for glutamine hydrolysis" evidence="1">
    <location>
        <position position="381"/>
    </location>
</feature>
<feature type="active site" evidence="1">
    <location>
        <position position="508"/>
    </location>
</feature>
<feature type="active site" evidence="1">
    <location>
        <position position="510"/>
    </location>
</feature>
<feature type="binding site" evidence="1">
    <location>
        <position position="13"/>
    </location>
    <ligand>
        <name>CTP</name>
        <dbReference type="ChEBI" id="CHEBI:37563"/>
        <note>allosteric inhibitor</note>
    </ligand>
</feature>
<feature type="binding site" evidence="1">
    <location>
        <position position="13"/>
    </location>
    <ligand>
        <name>UTP</name>
        <dbReference type="ChEBI" id="CHEBI:46398"/>
    </ligand>
</feature>
<feature type="binding site" evidence="1">
    <location>
        <begin position="14"/>
        <end position="19"/>
    </location>
    <ligand>
        <name>ATP</name>
        <dbReference type="ChEBI" id="CHEBI:30616"/>
    </ligand>
</feature>
<feature type="binding site" evidence="1">
    <location>
        <position position="54"/>
    </location>
    <ligand>
        <name>L-glutamine</name>
        <dbReference type="ChEBI" id="CHEBI:58359"/>
    </ligand>
</feature>
<feature type="binding site" evidence="1">
    <location>
        <position position="71"/>
    </location>
    <ligand>
        <name>ATP</name>
        <dbReference type="ChEBI" id="CHEBI:30616"/>
    </ligand>
</feature>
<feature type="binding site" evidence="1">
    <location>
        <position position="71"/>
    </location>
    <ligand>
        <name>Mg(2+)</name>
        <dbReference type="ChEBI" id="CHEBI:18420"/>
    </ligand>
</feature>
<feature type="binding site" evidence="1">
    <location>
        <position position="141"/>
    </location>
    <ligand>
        <name>Mg(2+)</name>
        <dbReference type="ChEBI" id="CHEBI:18420"/>
    </ligand>
</feature>
<feature type="binding site" evidence="1">
    <location>
        <begin position="148"/>
        <end position="150"/>
    </location>
    <ligand>
        <name>CTP</name>
        <dbReference type="ChEBI" id="CHEBI:37563"/>
        <note>allosteric inhibitor</note>
    </ligand>
</feature>
<feature type="binding site" evidence="1">
    <location>
        <begin position="188"/>
        <end position="193"/>
    </location>
    <ligand>
        <name>CTP</name>
        <dbReference type="ChEBI" id="CHEBI:37563"/>
        <note>allosteric inhibitor</note>
    </ligand>
</feature>
<feature type="binding site" evidence="1">
    <location>
        <begin position="188"/>
        <end position="193"/>
    </location>
    <ligand>
        <name>UTP</name>
        <dbReference type="ChEBI" id="CHEBI:46398"/>
    </ligand>
</feature>
<feature type="binding site" evidence="1">
    <location>
        <position position="224"/>
    </location>
    <ligand>
        <name>CTP</name>
        <dbReference type="ChEBI" id="CHEBI:37563"/>
        <note>allosteric inhibitor</note>
    </ligand>
</feature>
<feature type="binding site" evidence="1">
    <location>
        <position position="224"/>
    </location>
    <ligand>
        <name>UTP</name>
        <dbReference type="ChEBI" id="CHEBI:46398"/>
    </ligand>
</feature>
<feature type="binding site" evidence="1">
    <location>
        <position position="354"/>
    </location>
    <ligand>
        <name>L-glutamine</name>
        <dbReference type="ChEBI" id="CHEBI:58359"/>
    </ligand>
</feature>
<feature type="binding site" evidence="1">
    <location>
        <begin position="382"/>
        <end position="385"/>
    </location>
    <ligand>
        <name>L-glutamine</name>
        <dbReference type="ChEBI" id="CHEBI:58359"/>
    </ligand>
</feature>
<feature type="binding site" evidence="1">
    <location>
        <position position="405"/>
    </location>
    <ligand>
        <name>L-glutamine</name>
        <dbReference type="ChEBI" id="CHEBI:58359"/>
    </ligand>
</feature>
<feature type="binding site" evidence="1">
    <location>
        <position position="463"/>
    </location>
    <ligand>
        <name>L-glutamine</name>
        <dbReference type="ChEBI" id="CHEBI:58359"/>
    </ligand>
</feature>
<gene>
    <name evidence="1" type="primary">pyrG</name>
    <name type="ordered locus">str0134</name>
</gene>
<proteinExistence type="inferred from homology"/>
<evidence type="ECO:0000255" key="1">
    <source>
        <dbReference type="HAMAP-Rule" id="MF_01227"/>
    </source>
</evidence>
<organism>
    <name type="scientific">Streptococcus thermophilus (strain CNRZ 1066)</name>
    <dbReference type="NCBI Taxonomy" id="299768"/>
    <lineage>
        <taxon>Bacteria</taxon>
        <taxon>Bacillati</taxon>
        <taxon>Bacillota</taxon>
        <taxon>Bacilli</taxon>
        <taxon>Lactobacillales</taxon>
        <taxon>Streptococcaceae</taxon>
        <taxon>Streptococcus</taxon>
    </lineage>
</organism>